<keyword id="KW-0028">Amino-acid biosynthesis</keyword>
<keyword id="KW-0055">Arginine biosynthesis</keyword>
<keyword id="KW-0067">ATP-binding</keyword>
<keyword id="KW-0963">Cytoplasm</keyword>
<keyword id="KW-0436">Ligase</keyword>
<keyword id="KW-0547">Nucleotide-binding</keyword>
<comment type="catalytic activity">
    <reaction evidence="1">
        <text>L-citrulline + L-aspartate + ATP = 2-(N(omega)-L-arginino)succinate + AMP + diphosphate + H(+)</text>
        <dbReference type="Rhea" id="RHEA:10932"/>
        <dbReference type="ChEBI" id="CHEBI:15378"/>
        <dbReference type="ChEBI" id="CHEBI:29991"/>
        <dbReference type="ChEBI" id="CHEBI:30616"/>
        <dbReference type="ChEBI" id="CHEBI:33019"/>
        <dbReference type="ChEBI" id="CHEBI:57472"/>
        <dbReference type="ChEBI" id="CHEBI:57743"/>
        <dbReference type="ChEBI" id="CHEBI:456215"/>
        <dbReference type="EC" id="6.3.4.5"/>
    </reaction>
</comment>
<comment type="pathway">
    <text evidence="1">Amino-acid biosynthesis; L-arginine biosynthesis; L-arginine from L-ornithine and carbamoyl phosphate: step 2/3.</text>
</comment>
<comment type="subunit">
    <text evidence="1">Homotetramer.</text>
</comment>
<comment type="subcellular location">
    <subcellularLocation>
        <location evidence="1">Cytoplasm</location>
    </subcellularLocation>
</comment>
<comment type="similarity">
    <text evidence="1">Belongs to the argininosuccinate synthase family. Type 1 subfamily.</text>
</comment>
<sequence length="399" mass="44055">MSKEKVILAYSGGLDTSVAITWLKKDYDVIAVCMDVGEGKDLEFIHDKALTVGAVESYVLDVKDEFAEDYVLPALQAHAYYEQKYPLVSALSRPIIAKKLVEIAHKTGATTIAHGCTGKGNDQVRFEVAIAALDPSLKVVAPVREWKWSREEEIEYAKANGVPVPADLDNPYSVDQNLWGRANECGVLENPWNQAPEEAFGITNSPESAPDEAEYVDVTFKEGKPVALNGKEMKLADLIQEMNVIAGKHGVGRIDHVENRLVGIKSREIYECPGAIALLTAHKEIEDLTLVREVSHFKPILENELSNLIYNALWFSPATEAIIAYIKETQKVVNGIAKVKLYKGHAQVVARQSANSLYDENLATYTSADSFDQDAAIGFIKLWGLPTQVNSQVNHPFDK</sequence>
<accession>Q03IP8</accession>
<protein>
    <recommendedName>
        <fullName evidence="1">Argininosuccinate synthase</fullName>
        <ecNumber evidence="1">6.3.4.5</ecNumber>
    </recommendedName>
    <alternativeName>
        <fullName evidence="1">Citrulline--aspartate ligase</fullName>
    </alternativeName>
</protein>
<name>ASSY_STRTD</name>
<organism>
    <name type="scientific">Streptococcus thermophilus (strain ATCC BAA-491 / LMD-9)</name>
    <dbReference type="NCBI Taxonomy" id="322159"/>
    <lineage>
        <taxon>Bacteria</taxon>
        <taxon>Bacillati</taxon>
        <taxon>Bacillota</taxon>
        <taxon>Bacilli</taxon>
        <taxon>Lactobacillales</taxon>
        <taxon>Streptococcaceae</taxon>
        <taxon>Streptococcus</taxon>
    </lineage>
</organism>
<feature type="chain" id="PRO_1000000442" description="Argininosuccinate synthase">
    <location>
        <begin position="1"/>
        <end position="399"/>
    </location>
</feature>
<feature type="binding site" evidence="1">
    <location>
        <begin position="9"/>
        <end position="17"/>
    </location>
    <ligand>
        <name>ATP</name>
        <dbReference type="ChEBI" id="CHEBI:30616"/>
    </ligand>
</feature>
<feature type="binding site" evidence="1">
    <location>
        <position position="85"/>
    </location>
    <ligand>
        <name>L-citrulline</name>
        <dbReference type="ChEBI" id="CHEBI:57743"/>
    </ligand>
</feature>
<feature type="binding site" evidence="1">
    <location>
        <position position="115"/>
    </location>
    <ligand>
        <name>ATP</name>
        <dbReference type="ChEBI" id="CHEBI:30616"/>
    </ligand>
</feature>
<feature type="binding site" evidence="1">
    <location>
        <position position="117"/>
    </location>
    <ligand>
        <name>L-aspartate</name>
        <dbReference type="ChEBI" id="CHEBI:29991"/>
    </ligand>
</feature>
<feature type="binding site" evidence="1">
    <location>
        <position position="121"/>
    </location>
    <ligand>
        <name>L-aspartate</name>
        <dbReference type="ChEBI" id="CHEBI:29991"/>
    </ligand>
</feature>
<feature type="binding site" evidence="1">
    <location>
        <position position="121"/>
    </location>
    <ligand>
        <name>L-citrulline</name>
        <dbReference type="ChEBI" id="CHEBI:57743"/>
    </ligand>
</feature>
<feature type="binding site" evidence="1">
    <location>
        <position position="122"/>
    </location>
    <ligand>
        <name>L-aspartate</name>
        <dbReference type="ChEBI" id="CHEBI:29991"/>
    </ligand>
</feature>
<feature type="binding site" evidence="1">
    <location>
        <position position="125"/>
    </location>
    <ligand>
        <name>L-citrulline</name>
        <dbReference type="ChEBI" id="CHEBI:57743"/>
    </ligand>
</feature>
<feature type="binding site" evidence="1">
    <location>
        <position position="173"/>
    </location>
    <ligand>
        <name>L-citrulline</name>
        <dbReference type="ChEBI" id="CHEBI:57743"/>
    </ligand>
</feature>
<feature type="binding site" evidence="1">
    <location>
        <position position="258"/>
    </location>
    <ligand>
        <name>L-citrulline</name>
        <dbReference type="ChEBI" id="CHEBI:57743"/>
    </ligand>
</feature>
<feature type="binding site" evidence="1">
    <location>
        <position position="270"/>
    </location>
    <ligand>
        <name>L-citrulline</name>
        <dbReference type="ChEBI" id="CHEBI:57743"/>
    </ligand>
</feature>
<evidence type="ECO:0000255" key="1">
    <source>
        <dbReference type="HAMAP-Rule" id="MF_00005"/>
    </source>
</evidence>
<gene>
    <name evidence="1" type="primary">argG</name>
    <name type="ordered locus">STER_1792</name>
</gene>
<dbReference type="EC" id="6.3.4.5" evidence="1"/>
<dbReference type="EMBL" id="CP000419">
    <property type="protein sequence ID" value="ABJ66924.1"/>
    <property type="molecule type" value="Genomic_DNA"/>
</dbReference>
<dbReference type="RefSeq" id="WP_002953531.1">
    <property type="nucleotide sequence ID" value="NC_008532.1"/>
</dbReference>
<dbReference type="SMR" id="Q03IP8"/>
<dbReference type="GeneID" id="66899550"/>
<dbReference type="KEGG" id="ste:STER_1792"/>
<dbReference type="HOGENOM" id="CLU_032784_4_2_9"/>
<dbReference type="UniPathway" id="UPA00068">
    <property type="reaction ID" value="UER00113"/>
</dbReference>
<dbReference type="GO" id="GO:0005737">
    <property type="term" value="C:cytoplasm"/>
    <property type="evidence" value="ECO:0007669"/>
    <property type="project" value="UniProtKB-SubCell"/>
</dbReference>
<dbReference type="GO" id="GO:0004055">
    <property type="term" value="F:argininosuccinate synthase activity"/>
    <property type="evidence" value="ECO:0007669"/>
    <property type="project" value="UniProtKB-UniRule"/>
</dbReference>
<dbReference type="GO" id="GO:0005524">
    <property type="term" value="F:ATP binding"/>
    <property type="evidence" value="ECO:0007669"/>
    <property type="project" value="UniProtKB-UniRule"/>
</dbReference>
<dbReference type="GO" id="GO:0000053">
    <property type="term" value="P:argininosuccinate metabolic process"/>
    <property type="evidence" value="ECO:0007669"/>
    <property type="project" value="TreeGrafter"/>
</dbReference>
<dbReference type="GO" id="GO:0006526">
    <property type="term" value="P:L-arginine biosynthetic process"/>
    <property type="evidence" value="ECO:0007669"/>
    <property type="project" value="UniProtKB-UniRule"/>
</dbReference>
<dbReference type="GO" id="GO:0000050">
    <property type="term" value="P:urea cycle"/>
    <property type="evidence" value="ECO:0007669"/>
    <property type="project" value="TreeGrafter"/>
</dbReference>
<dbReference type="CDD" id="cd01999">
    <property type="entry name" value="ASS"/>
    <property type="match status" value="1"/>
</dbReference>
<dbReference type="FunFam" id="1.20.5.470:FF:000002">
    <property type="entry name" value="Argininosuccinate synthase"/>
    <property type="match status" value="1"/>
</dbReference>
<dbReference type="FunFam" id="3.40.50.620:FF:000038">
    <property type="entry name" value="Argininosuccinate synthase"/>
    <property type="match status" value="1"/>
</dbReference>
<dbReference type="FunFam" id="3.90.1260.10:FF:000007">
    <property type="entry name" value="Argininosuccinate synthase"/>
    <property type="match status" value="1"/>
</dbReference>
<dbReference type="Gene3D" id="3.90.1260.10">
    <property type="entry name" value="Argininosuccinate synthetase, chain A, domain 2"/>
    <property type="match status" value="1"/>
</dbReference>
<dbReference type="Gene3D" id="3.40.50.620">
    <property type="entry name" value="HUPs"/>
    <property type="match status" value="1"/>
</dbReference>
<dbReference type="Gene3D" id="1.20.5.470">
    <property type="entry name" value="Single helix bin"/>
    <property type="match status" value="1"/>
</dbReference>
<dbReference type="HAMAP" id="MF_00005">
    <property type="entry name" value="Arg_succ_synth_type1"/>
    <property type="match status" value="1"/>
</dbReference>
<dbReference type="InterPro" id="IPR048268">
    <property type="entry name" value="Arginosuc_syn_C"/>
</dbReference>
<dbReference type="InterPro" id="IPR048267">
    <property type="entry name" value="Arginosuc_syn_N"/>
</dbReference>
<dbReference type="InterPro" id="IPR001518">
    <property type="entry name" value="Arginosuc_synth"/>
</dbReference>
<dbReference type="InterPro" id="IPR018223">
    <property type="entry name" value="Arginosuc_synth_CS"/>
</dbReference>
<dbReference type="InterPro" id="IPR023434">
    <property type="entry name" value="Arginosuc_synth_type_1_subfam"/>
</dbReference>
<dbReference type="InterPro" id="IPR024074">
    <property type="entry name" value="AS_cat/multimer_dom_body"/>
</dbReference>
<dbReference type="InterPro" id="IPR014729">
    <property type="entry name" value="Rossmann-like_a/b/a_fold"/>
</dbReference>
<dbReference type="NCBIfam" id="TIGR00032">
    <property type="entry name" value="argG"/>
    <property type="match status" value="1"/>
</dbReference>
<dbReference type="NCBIfam" id="NF001770">
    <property type="entry name" value="PRK00509.1"/>
    <property type="match status" value="1"/>
</dbReference>
<dbReference type="PANTHER" id="PTHR11587">
    <property type="entry name" value="ARGININOSUCCINATE SYNTHASE"/>
    <property type="match status" value="1"/>
</dbReference>
<dbReference type="PANTHER" id="PTHR11587:SF2">
    <property type="entry name" value="ARGININOSUCCINATE SYNTHASE"/>
    <property type="match status" value="1"/>
</dbReference>
<dbReference type="Pfam" id="PF20979">
    <property type="entry name" value="Arginosuc_syn_C"/>
    <property type="match status" value="1"/>
</dbReference>
<dbReference type="Pfam" id="PF00764">
    <property type="entry name" value="Arginosuc_synth"/>
    <property type="match status" value="1"/>
</dbReference>
<dbReference type="SUPFAM" id="SSF52402">
    <property type="entry name" value="Adenine nucleotide alpha hydrolases-like"/>
    <property type="match status" value="1"/>
</dbReference>
<dbReference type="SUPFAM" id="SSF69864">
    <property type="entry name" value="Argininosuccinate synthetase, C-terminal domain"/>
    <property type="match status" value="1"/>
</dbReference>
<dbReference type="PROSITE" id="PS00564">
    <property type="entry name" value="ARGININOSUCCIN_SYN_1"/>
    <property type="match status" value="1"/>
</dbReference>
<dbReference type="PROSITE" id="PS00565">
    <property type="entry name" value="ARGININOSUCCIN_SYN_2"/>
    <property type="match status" value="1"/>
</dbReference>
<reference key="1">
    <citation type="journal article" date="2006" name="Proc. Natl. Acad. Sci. U.S.A.">
        <title>Comparative genomics of the lactic acid bacteria.</title>
        <authorList>
            <person name="Makarova K.S."/>
            <person name="Slesarev A."/>
            <person name="Wolf Y.I."/>
            <person name="Sorokin A."/>
            <person name="Mirkin B."/>
            <person name="Koonin E.V."/>
            <person name="Pavlov A."/>
            <person name="Pavlova N."/>
            <person name="Karamychev V."/>
            <person name="Polouchine N."/>
            <person name="Shakhova V."/>
            <person name="Grigoriev I."/>
            <person name="Lou Y."/>
            <person name="Rohksar D."/>
            <person name="Lucas S."/>
            <person name="Huang K."/>
            <person name="Goodstein D.M."/>
            <person name="Hawkins T."/>
            <person name="Plengvidhya V."/>
            <person name="Welker D."/>
            <person name="Hughes J."/>
            <person name="Goh Y."/>
            <person name="Benson A."/>
            <person name="Baldwin K."/>
            <person name="Lee J.-H."/>
            <person name="Diaz-Muniz I."/>
            <person name="Dosti B."/>
            <person name="Smeianov V."/>
            <person name="Wechter W."/>
            <person name="Barabote R."/>
            <person name="Lorca G."/>
            <person name="Altermann E."/>
            <person name="Barrangou R."/>
            <person name="Ganesan B."/>
            <person name="Xie Y."/>
            <person name="Rawsthorne H."/>
            <person name="Tamir D."/>
            <person name="Parker C."/>
            <person name="Breidt F."/>
            <person name="Broadbent J.R."/>
            <person name="Hutkins R."/>
            <person name="O'Sullivan D."/>
            <person name="Steele J."/>
            <person name="Unlu G."/>
            <person name="Saier M.H. Jr."/>
            <person name="Klaenhammer T."/>
            <person name="Richardson P."/>
            <person name="Kozyavkin S."/>
            <person name="Weimer B.C."/>
            <person name="Mills D.A."/>
        </authorList>
    </citation>
    <scope>NUCLEOTIDE SEQUENCE [LARGE SCALE GENOMIC DNA]</scope>
    <source>
        <strain>ATCC BAA-491 / LMD-9</strain>
    </source>
</reference>
<proteinExistence type="inferred from homology"/>